<organism>
    <name type="scientific">Schizosaccharomyces pombe (strain 972 / ATCC 24843)</name>
    <name type="common">Fission yeast</name>
    <dbReference type="NCBI Taxonomy" id="284812"/>
    <lineage>
        <taxon>Eukaryota</taxon>
        <taxon>Fungi</taxon>
        <taxon>Dikarya</taxon>
        <taxon>Ascomycota</taxon>
        <taxon>Taphrinomycotina</taxon>
        <taxon>Schizosaccharomycetes</taxon>
        <taxon>Schizosaccharomycetales</taxon>
        <taxon>Schizosaccharomycetaceae</taxon>
        <taxon>Schizosaccharomyces</taxon>
    </lineage>
</organism>
<feature type="signal peptide" evidence="1">
    <location>
        <begin position="1"/>
        <end position="19"/>
    </location>
</feature>
<feature type="chain" id="PRO_0000371801" description="Uncharacterized membrane protein C61.05">
    <location>
        <begin position="20"/>
        <end position="469"/>
    </location>
</feature>
<feature type="transmembrane region" description="Helical" evidence="1">
    <location>
        <begin position="199"/>
        <end position="219"/>
    </location>
</feature>
<feature type="transmembrane region" description="Helical" evidence="1">
    <location>
        <begin position="236"/>
        <end position="256"/>
    </location>
</feature>
<feature type="transmembrane region" description="Helical" evidence="1">
    <location>
        <begin position="283"/>
        <end position="303"/>
    </location>
</feature>
<feature type="transmembrane region" description="Helical" evidence="1">
    <location>
        <begin position="305"/>
        <end position="325"/>
    </location>
</feature>
<feature type="transmembrane region" description="Helical" evidence="1">
    <location>
        <begin position="338"/>
        <end position="358"/>
    </location>
</feature>
<feature type="transmembrane region" description="Helical" evidence="1">
    <location>
        <begin position="386"/>
        <end position="406"/>
    </location>
</feature>
<feature type="transmembrane region" description="Helical" evidence="1">
    <location>
        <begin position="413"/>
        <end position="433"/>
    </location>
</feature>
<protein>
    <recommendedName>
        <fullName>Uncharacterized membrane protein C61.05</fullName>
    </recommendedName>
</protein>
<dbReference type="EMBL" id="CU329672">
    <property type="protein sequence ID" value="CAA22274.1"/>
    <property type="molecule type" value="Genomic_DNA"/>
</dbReference>
<dbReference type="PIR" id="T41465">
    <property type="entry name" value="T41465"/>
</dbReference>
<dbReference type="RefSeq" id="NP_588196.1">
    <property type="nucleotide sequence ID" value="NM_001023186.2"/>
</dbReference>
<dbReference type="BioGRID" id="275602">
    <property type="interactions" value="13"/>
</dbReference>
<dbReference type="STRING" id="284812.O94349"/>
<dbReference type="iPTMnet" id="O94349"/>
<dbReference type="PaxDb" id="4896-SPCC61.05.1"/>
<dbReference type="EnsemblFungi" id="SPCC61.05.1">
    <property type="protein sequence ID" value="SPCC61.05.1:pep"/>
    <property type="gene ID" value="SPCC61.05"/>
</dbReference>
<dbReference type="KEGG" id="spo:2539029"/>
<dbReference type="PomBase" id="SPCC61.05"/>
<dbReference type="VEuPathDB" id="FungiDB:SPCC61.05"/>
<dbReference type="HOGENOM" id="CLU_582852_0_0_1"/>
<dbReference type="InParanoid" id="O94349"/>
<dbReference type="OMA" id="CKHAYSH"/>
<dbReference type="PRO" id="PR:O94349"/>
<dbReference type="Proteomes" id="UP000002485">
    <property type="component" value="Chromosome III"/>
</dbReference>
<dbReference type="GO" id="GO:0016020">
    <property type="term" value="C:membrane"/>
    <property type="evidence" value="ECO:0007669"/>
    <property type="project" value="UniProtKB-SubCell"/>
</dbReference>
<sequence>MRINFVLLITLILPWFVSGDSSEEAVDAPLDVKDDTGNKDYYKDSTGAYHFDKLIVTPLEYRDGESWKQSVIYCDLIFAKENKEEKGSFVKAQLKEDAEHPFIYRLLKLQTPLETYRGFIDGKNTEILDEIKSINLFEDFLSESLVPEISPSVNIPIDETALYCFIGIQETEPIRIPWPVLTVEFYGDAPPPESYFRTIKSTLLAISMFLGFITLTWLLRCIKSQSGVQPAQISLAFWVFIFVFTHSYQVYSMVAIGRGSFSTWYVVSFLFSLVFEEGLEQSAYTSFLLVLCFGLGITKPALVKYYVYLAFVAFVQGLFVTFAPLSYPVMSFYGVRGILLKLIWNIYTFVYYGLPFFAVYRLYKQAGESRKLGFEAKYSLLRTCYIALAAVTVSNCLFLGVVRPLLGSQLSLGFQLITSCITFVDFLVFAFLFDCSKFVFLKYQPIPFEWYALESMESLNLEPAPDRKV</sequence>
<accession>O94349</accession>
<gene>
    <name type="ORF">SPCC61.05</name>
</gene>
<reference key="1">
    <citation type="journal article" date="2002" name="Nature">
        <title>The genome sequence of Schizosaccharomyces pombe.</title>
        <authorList>
            <person name="Wood V."/>
            <person name="Gwilliam R."/>
            <person name="Rajandream M.A."/>
            <person name="Lyne M.H."/>
            <person name="Lyne R."/>
            <person name="Stewart A."/>
            <person name="Sgouros J.G."/>
            <person name="Peat N."/>
            <person name="Hayles J."/>
            <person name="Baker S.G."/>
            <person name="Basham D."/>
            <person name="Bowman S."/>
            <person name="Brooks K."/>
            <person name="Brown D."/>
            <person name="Brown S."/>
            <person name="Chillingworth T."/>
            <person name="Churcher C.M."/>
            <person name="Collins M."/>
            <person name="Connor R."/>
            <person name="Cronin A."/>
            <person name="Davis P."/>
            <person name="Feltwell T."/>
            <person name="Fraser A."/>
            <person name="Gentles S."/>
            <person name="Goble A."/>
            <person name="Hamlin N."/>
            <person name="Harris D.E."/>
            <person name="Hidalgo J."/>
            <person name="Hodgson G."/>
            <person name="Holroyd S."/>
            <person name="Hornsby T."/>
            <person name="Howarth S."/>
            <person name="Huckle E.J."/>
            <person name="Hunt S."/>
            <person name="Jagels K."/>
            <person name="James K.D."/>
            <person name="Jones L."/>
            <person name="Jones M."/>
            <person name="Leather S."/>
            <person name="McDonald S."/>
            <person name="McLean J."/>
            <person name="Mooney P."/>
            <person name="Moule S."/>
            <person name="Mungall K.L."/>
            <person name="Murphy L.D."/>
            <person name="Niblett D."/>
            <person name="Odell C."/>
            <person name="Oliver K."/>
            <person name="O'Neil S."/>
            <person name="Pearson D."/>
            <person name="Quail M.A."/>
            <person name="Rabbinowitsch E."/>
            <person name="Rutherford K.M."/>
            <person name="Rutter S."/>
            <person name="Saunders D."/>
            <person name="Seeger K."/>
            <person name="Sharp S."/>
            <person name="Skelton J."/>
            <person name="Simmonds M.N."/>
            <person name="Squares R."/>
            <person name="Squares S."/>
            <person name="Stevens K."/>
            <person name="Taylor K."/>
            <person name="Taylor R.G."/>
            <person name="Tivey A."/>
            <person name="Walsh S.V."/>
            <person name="Warren T."/>
            <person name="Whitehead S."/>
            <person name="Woodward J.R."/>
            <person name="Volckaert G."/>
            <person name="Aert R."/>
            <person name="Robben J."/>
            <person name="Grymonprez B."/>
            <person name="Weltjens I."/>
            <person name="Vanstreels E."/>
            <person name="Rieger M."/>
            <person name="Schaefer M."/>
            <person name="Mueller-Auer S."/>
            <person name="Gabel C."/>
            <person name="Fuchs M."/>
            <person name="Duesterhoeft A."/>
            <person name="Fritzc C."/>
            <person name="Holzer E."/>
            <person name="Moestl D."/>
            <person name="Hilbert H."/>
            <person name="Borzym K."/>
            <person name="Langer I."/>
            <person name="Beck A."/>
            <person name="Lehrach H."/>
            <person name="Reinhardt R."/>
            <person name="Pohl T.M."/>
            <person name="Eger P."/>
            <person name="Zimmermann W."/>
            <person name="Wedler H."/>
            <person name="Wambutt R."/>
            <person name="Purnelle B."/>
            <person name="Goffeau A."/>
            <person name="Cadieu E."/>
            <person name="Dreano S."/>
            <person name="Gloux S."/>
            <person name="Lelaure V."/>
            <person name="Mottier S."/>
            <person name="Galibert F."/>
            <person name="Aves S.J."/>
            <person name="Xiang Z."/>
            <person name="Hunt C."/>
            <person name="Moore K."/>
            <person name="Hurst S.M."/>
            <person name="Lucas M."/>
            <person name="Rochet M."/>
            <person name="Gaillardin C."/>
            <person name="Tallada V.A."/>
            <person name="Garzon A."/>
            <person name="Thode G."/>
            <person name="Daga R.R."/>
            <person name="Cruzado L."/>
            <person name="Jimenez J."/>
            <person name="Sanchez M."/>
            <person name="del Rey F."/>
            <person name="Benito J."/>
            <person name="Dominguez A."/>
            <person name="Revuelta J.L."/>
            <person name="Moreno S."/>
            <person name="Armstrong J."/>
            <person name="Forsburg S.L."/>
            <person name="Cerutti L."/>
            <person name="Lowe T."/>
            <person name="McCombie W.R."/>
            <person name="Paulsen I."/>
            <person name="Potashkin J."/>
            <person name="Shpakovski G.V."/>
            <person name="Ussery D."/>
            <person name="Barrell B.G."/>
            <person name="Nurse P."/>
        </authorList>
    </citation>
    <scope>NUCLEOTIDE SEQUENCE [LARGE SCALE GENOMIC DNA]</scope>
    <source>
        <strain>972 / ATCC 24843</strain>
    </source>
</reference>
<keyword id="KW-0472">Membrane</keyword>
<keyword id="KW-1185">Reference proteome</keyword>
<keyword id="KW-0732">Signal</keyword>
<keyword id="KW-0812">Transmembrane</keyword>
<keyword id="KW-1133">Transmembrane helix</keyword>
<proteinExistence type="inferred from homology"/>
<comment type="subcellular location">
    <subcellularLocation>
        <location evidence="2">Membrane</location>
        <topology evidence="2">Multi-pass membrane protein</topology>
    </subcellularLocation>
</comment>
<name>YCB5_SCHPO</name>
<evidence type="ECO:0000255" key="1"/>
<evidence type="ECO:0000305" key="2"/>